<protein>
    <recommendedName>
        <fullName evidence="1">Trigger factor</fullName>
        <shortName evidence="1">TF</shortName>
        <ecNumber evidence="1">5.2.1.8</ecNumber>
    </recommendedName>
    <alternativeName>
        <fullName evidence="1">PPIase</fullName>
    </alternativeName>
</protein>
<comment type="function">
    <text evidence="1">Involved in protein export. Acts as a chaperone by maintaining the newly synthesized protein in an open conformation. Functions as a peptidyl-prolyl cis-trans isomerase.</text>
</comment>
<comment type="catalytic activity">
    <reaction evidence="1">
        <text>[protein]-peptidylproline (omega=180) = [protein]-peptidylproline (omega=0)</text>
        <dbReference type="Rhea" id="RHEA:16237"/>
        <dbReference type="Rhea" id="RHEA-COMP:10747"/>
        <dbReference type="Rhea" id="RHEA-COMP:10748"/>
        <dbReference type="ChEBI" id="CHEBI:83833"/>
        <dbReference type="ChEBI" id="CHEBI:83834"/>
        <dbReference type="EC" id="5.2.1.8"/>
    </reaction>
</comment>
<comment type="subcellular location">
    <subcellularLocation>
        <location>Cytoplasm</location>
    </subcellularLocation>
    <text evidence="1">About half TF is bound to the ribosome near the polypeptide exit tunnel while the other half is free in the cytoplasm.</text>
</comment>
<comment type="domain">
    <text evidence="1">Consists of 3 domains; the N-terminus binds the ribosome, the middle domain has PPIase activity, while the C-terminus has intrinsic chaperone activity on its own.</text>
</comment>
<comment type="similarity">
    <text evidence="1">Belongs to the FKBP-type PPIase family. Tig subfamily.</text>
</comment>
<evidence type="ECO:0000255" key="1">
    <source>
        <dbReference type="HAMAP-Rule" id="MF_00303"/>
    </source>
</evidence>
<dbReference type="EC" id="5.2.1.8" evidence="1"/>
<dbReference type="EMBL" id="CP000020">
    <property type="protein sequence ID" value="AAW85290.1"/>
    <property type="molecule type" value="Genomic_DNA"/>
</dbReference>
<dbReference type="RefSeq" id="WP_011261489.1">
    <property type="nucleotide sequence ID" value="NC_006840.2"/>
</dbReference>
<dbReference type="RefSeq" id="YP_204178.1">
    <property type="nucleotide sequence ID" value="NC_006840.2"/>
</dbReference>
<dbReference type="SMR" id="Q5E6Q6"/>
<dbReference type="STRING" id="312309.VF_0795"/>
<dbReference type="EnsemblBacteria" id="AAW85290">
    <property type="protein sequence ID" value="AAW85290"/>
    <property type="gene ID" value="VF_0795"/>
</dbReference>
<dbReference type="GeneID" id="54163463"/>
<dbReference type="KEGG" id="vfi:VF_0795"/>
<dbReference type="PATRIC" id="fig|312309.11.peg.787"/>
<dbReference type="eggNOG" id="COG0544">
    <property type="taxonomic scope" value="Bacteria"/>
</dbReference>
<dbReference type="HOGENOM" id="CLU_033058_2_0_6"/>
<dbReference type="OrthoDB" id="9767721at2"/>
<dbReference type="Proteomes" id="UP000000537">
    <property type="component" value="Chromosome I"/>
</dbReference>
<dbReference type="GO" id="GO:0005737">
    <property type="term" value="C:cytoplasm"/>
    <property type="evidence" value="ECO:0007669"/>
    <property type="project" value="UniProtKB-SubCell"/>
</dbReference>
<dbReference type="GO" id="GO:0003755">
    <property type="term" value="F:peptidyl-prolyl cis-trans isomerase activity"/>
    <property type="evidence" value="ECO:0007669"/>
    <property type="project" value="UniProtKB-UniRule"/>
</dbReference>
<dbReference type="GO" id="GO:0044183">
    <property type="term" value="F:protein folding chaperone"/>
    <property type="evidence" value="ECO:0007669"/>
    <property type="project" value="TreeGrafter"/>
</dbReference>
<dbReference type="GO" id="GO:0043022">
    <property type="term" value="F:ribosome binding"/>
    <property type="evidence" value="ECO:0007669"/>
    <property type="project" value="TreeGrafter"/>
</dbReference>
<dbReference type="GO" id="GO:0051083">
    <property type="term" value="P:'de novo' cotranslational protein folding"/>
    <property type="evidence" value="ECO:0007669"/>
    <property type="project" value="TreeGrafter"/>
</dbReference>
<dbReference type="GO" id="GO:0051301">
    <property type="term" value="P:cell division"/>
    <property type="evidence" value="ECO:0007669"/>
    <property type="project" value="UniProtKB-KW"/>
</dbReference>
<dbReference type="GO" id="GO:0061077">
    <property type="term" value="P:chaperone-mediated protein folding"/>
    <property type="evidence" value="ECO:0007669"/>
    <property type="project" value="TreeGrafter"/>
</dbReference>
<dbReference type="GO" id="GO:0015031">
    <property type="term" value="P:protein transport"/>
    <property type="evidence" value="ECO:0007669"/>
    <property type="project" value="UniProtKB-UniRule"/>
</dbReference>
<dbReference type="GO" id="GO:0043335">
    <property type="term" value="P:protein unfolding"/>
    <property type="evidence" value="ECO:0007669"/>
    <property type="project" value="TreeGrafter"/>
</dbReference>
<dbReference type="FunFam" id="3.10.50.40:FF:000001">
    <property type="entry name" value="Trigger factor"/>
    <property type="match status" value="1"/>
</dbReference>
<dbReference type="FunFam" id="3.30.70.1050:FF:000001">
    <property type="entry name" value="Trigger factor"/>
    <property type="match status" value="1"/>
</dbReference>
<dbReference type="Gene3D" id="3.10.50.40">
    <property type="match status" value="1"/>
</dbReference>
<dbReference type="Gene3D" id="3.30.70.1050">
    <property type="entry name" value="Trigger factor ribosome-binding domain"/>
    <property type="match status" value="1"/>
</dbReference>
<dbReference type="Gene3D" id="1.10.3120.10">
    <property type="entry name" value="Trigger factor, C-terminal domain"/>
    <property type="match status" value="1"/>
</dbReference>
<dbReference type="HAMAP" id="MF_00303">
    <property type="entry name" value="Trigger_factor_Tig"/>
    <property type="match status" value="1"/>
</dbReference>
<dbReference type="InterPro" id="IPR046357">
    <property type="entry name" value="PPIase_dom_sf"/>
</dbReference>
<dbReference type="InterPro" id="IPR001179">
    <property type="entry name" value="PPIase_FKBP_dom"/>
</dbReference>
<dbReference type="InterPro" id="IPR005215">
    <property type="entry name" value="Trig_fac"/>
</dbReference>
<dbReference type="InterPro" id="IPR008880">
    <property type="entry name" value="Trigger_fac_C"/>
</dbReference>
<dbReference type="InterPro" id="IPR037041">
    <property type="entry name" value="Trigger_fac_C_sf"/>
</dbReference>
<dbReference type="InterPro" id="IPR008881">
    <property type="entry name" value="Trigger_fac_ribosome-bd_bac"/>
</dbReference>
<dbReference type="InterPro" id="IPR036611">
    <property type="entry name" value="Trigger_fac_ribosome-bd_sf"/>
</dbReference>
<dbReference type="InterPro" id="IPR027304">
    <property type="entry name" value="Trigger_fact/SurA_dom_sf"/>
</dbReference>
<dbReference type="NCBIfam" id="TIGR00115">
    <property type="entry name" value="tig"/>
    <property type="match status" value="1"/>
</dbReference>
<dbReference type="PANTHER" id="PTHR30560">
    <property type="entry name" value="TRIGGER FACTOR CHAPERONE AND PEPTIDYL-PROLYL CIS/TRANS ISOMERASE"/>
    <property type="match status" value="1"/>
</dbReference>
<dbReference type="PANTHER" id="PTHR30560:SF3">
    <property type="entry name" value="TRIGGER FACTOR-LIKE PROTEIN TIG, CHLOROPLASTIC"/>
    <property type="match status" value="1"/>
</dbReference>
<dbReference type="Pfam" id="PF00254">
    <property type="entry name" value="FKBP_C"/>
    <property type="match status" value="1"/>
</dbReference>
<dbReference type="Pfam" id="PF05698">
    <property type="entry name" value="Trigger_C"/>
    <property type="match status" value="1"/>
</dbReference>
<dbReference type="Pfam" id="PF05697">
    <property type="entry name" value="Trigger_N"/>
    <property type="match status" value="1"/>
</dbReference>
<dbReference type="PIRSF" id="PIRSF003095">
    <property type="entry name" value="Trigger_factor"/>
    <property type="match status" value="1"/>
</dbReference>
<dbReference type="SUPFAM" id="SSF54534">
    <property type="entry name" value="FKBP-like"/>
    <property type="match status" value="1"/>
</dbReference>
<dbReference type="SUPFAM" id="SSF109998">
    <property type="entry name" value="Triger factor/SurA peptide-binding domain-like"/>
    <property type="match status" value="1"/>
</dbReference>
<dbReference type="SUPFAM" id="SSF102735">
    <property type="entry name" value="Trigger factor ribosome-binding domain"/>
    <property type="match status" value="1"/>
</dbReference>
<dbReference type="PROSITE" id="PS50059">
    <property type="entry name" value="FKBP_PPIASE"/>
    <property type="match status" value="1"/>
</dbReference>
<keyword id="KW-0131">Cell cycle</keyword>
<keyword id="KW-0132">Cell division</keyword>
<keyword id="KW-0143">Chaperone</keyword>
<keyword id="KW-0963">Cytoplasm</keyword>
<keyword id="KW-0413">Isomerase</keyword>
<keyword id="KW-1185">Reference proteome</keyword>
<keyword id="KW-0697">Rotamase</keyword>
<gene>
    <name evidence="1" type="primary">tig</name>
    <name type="ordered locus">VF_0795</name>
</gene>
<sequence>MQVTVETKEGLERVLTITVPAANIEDAVSAELRNIAKNRRFDGFRKGKVPMKMVAKMYGQAVRNDVMGEVMQRHFIEAIVKEKINPAGAPTFTPVEFAEGKDLVFTASFEVYPEVALQGLDKVVVEKPQVEVKDEDVAEMLETLRKQQSTWADADIAAEDGTRATINFVGSIDGEEFEGGKAENFPLEMGQGRMIPGFEDGIKGKKAGEELTIDVNFPEEYHAENLKGKAAQFAIKVVKVESRELPELNDEFVAKFGAEGGVEGLKAEVRKNMERELAQAVKNKIKEQAINGLVEQNNIDVPSALIDQEVQVLRQQAVQRFGGNADTAPELPRELFEEQAKRRVVVGLLLGEVIKSEELKADDEKVKALINEMASAYEDPTEVVAYYEGNEQMMNNMRNVALEEQAVEAILAKAQVSEKAFGFNELMNQQPA</sequence>
<accession>Q5E6Q6</accession>
<feature type="chain" id="PRO_0000179458" description="Trigger factor">
    <location>
        <begin position="1"/>
        <end position="432"/>
    </location>
</feature>
<feature type="domain" description="PPIase FKBP-type" evidence="1">
    <location>
        <begin position="161"/>
        <end position="246"/>
    </location>
</feature>
<reference key="1">
    <citation type="journal article" date="2005" name="Proc. Natl. Acad. Sci. U.S.A.">
        <title>Complete genome sequence of Vibrio fischeri: a symbiotic bacterium with pathogenic congeners.</title>
        <authorList>
            <person name="Ruby E.G."/>
            <person name="Urbanowski M."/>
            <person name="Campbell J."/>
            <person name="Dunn A."/>
            <person name="Faini M."/>
            <person name="Gunsalus R."/>
            <person name="Lostroh P."/>
            <person name="Lupp C."/>
            <person name="McCann J."/>
            <person name="Millikan D."/>
            <person name="Schaefer A."/>
            <person name="Stabb E."/>
            <person name="Stevens A."/>
            <person name="Visick K."/>
            <person name="Whistler C."/>
            <person name="Greenberg E.P."/>
        </authorList>
    </citation>
    <scope>NUCLEOTIDE SEQUENCE [LARGE SCALE GENOMIC DNA]</scope>
    <source>
        <strain>ATCC 700601 / ES114</strain>
    </source>
</reference>
<proteinExistence type="inferred from homology"/>
<organism>
    <name type="scientific">Aliivibrio fischeri (strain ATCC 700601 / ES114)</name>
    <name type="common">Vibrio fischeri</name>
    <dbReference type="NCBI Taxonomy" id="312309"/>
    <lineage>
        <taxon>Bacteria</taxon>
        <taxon>Pseudomonadati</taxon>
        <taxon>Pseudomonadota</taxon>
        <taxon>Gammaproteobacteria</taxon>
        <taxon>Vibrionales</taxon>
        <taxon>Vibrionaceae</taxon>
        <taxon>Aliivibrio</taxon>
    </lineage>
</organism>
<name>TIG_ALIF1</name>